<comment type="function">
    <text evidence="1">Responsible for synthesis of pseudouridine from uracil-55 in the psi GC loop of transfer RNAs.</text>
</comment>
<comment type="catalytic activity">
    <reaction evidence="1">
        <text>uridine(55) in tRNA = pseudouridine(55) in tRNA</text>
        <dbReference type="Rhea" id="RHEA:42532"/>
        <dbReference type="Rhea" id="RHEA-COMP:10101"/>
        <dbReference type="Rhea" id="RHEA-COMP:10102"/>
        <dbReference type="ChEBI" id="CHEBI:65314"/>
        <dbReference type="ChEBI" id="CHEBI:65315"/>
        <dbReference type="EC" id="5.4.99.25"/>
    </reaction>
</comment>
<comment type="similarity">
    <text evidence="1">Belongs to the pseudouridine synthase TruB family. Type 1 subfamily.</text>
</comment>
<accession>B7KGX7</accession>
<reference key="1">
    <citation type="journal article" date="2011" name="MBio">
        <title>Novel metabolic attributes of the genus Cyanothece, comprising a group of unicellular nitrogen-fixing Cyanobacteria.</title>
        <authorList>
            <person name="Bandyopadhyay A."/>
            <person name="Elvitigala T."/>
            <person name="Welsh E."/>
            <person name="Stockel J."/>
            <person name="Liberton M."/>
            <person name="Min H."/>
            <person name="Sherman L.A."/>
            <person name="Pakrasi H.B."/>
        </authorList>
    </citation>
    <scope>NUCLEOTIDE SEQUENCE [LARGE SCALE GENOMIC DNA]</scope>
    <source>
        <strain>PCC 7424</strain>
    </source>
</reference>
<gene>
    <name evidence="1" type="primary">truB</name>
    <name type="ordered locus">PCC7424_5113</name>
</gene>
<protein>
    <recommendedName>
        <fullName evidence="1">tRNA pseudouridine synthase B</fullName>
        <ecNumber evidence="1">5.4.99.25</ecNumber>
    </recommendedName>
    <alternativeName>
        <fullName evidence="1">tRNA pseudouridine(55) synthase</fullName>
        <shortName evidence="1">Psi55 synthase</shortName>
    </alternativeName>
    <alternativeName>
        <fullName evidence="1">tRNA pseudouridylate synthase</fullName>
    </alternativeName>
    <alternativeName>
        <fullName evidence="1">tRNA-uridine isomerase</fullName>
    </alternativeName>
</protein>
<evidence type="ECO:0000255" key="1">
    <source>
        <dbReference type="HAMAP-Rule" id="MF_01080"/>
    </source>
</evidence>
<organism>
    <name type="scientific">Gloeothece citriformis (strain PCC 7424)</name>
    <name type="common">Cyanothece sp. (strain PCC 7424)</name>
    <dbReference type="NCBI Taxonomy" id="65393"/>
    <lineage>
        <taxon>Bacteria</taxon>
        <taxon>Bacillati</taxon>
        <taxon>Cyanobacteriota</taxon>
        <taxon>Cyanophyceae</taxon>
        <taxon>Oscillatoriophycideae</taxon>
        <taxon>Chroococcales</taxon>
        <taxon>Aphanothecaceae</taxon>
        <taxon>Gloeothece</taxon>
        <taxon>Gloeothece citriformis</taxon>
    </lineage>
</organism>
<dbReference type="EC" id="5.4.99.25" evidence="1"/>
<dbReference type="EMBL" id="CP001291">
    <property type="protein sequence ID" value="ACK73464.1"/>
    <property type="molecule type" value="Genomic_DNA"/>
</dbReference>
<dbReference type="SMR" id="B7KGX7"/>
<dbReference type="STRING" id="65393.PCC7424_5113"/>
<dbReference type="KEGG" id="cyc:PCC7424_5113"/>
<dbReference type="eggNOG" id="COG0130">
    <property type="taxonomic scope" value="Bacteria"/>
</dbReference>
<dbReference type="HOGENOM" id="CLU_032087_0_0_3"/>
<dbReference type="Proteomes" id="UP000002384">
    <property type="component" value="Chromosome"/>
</dbReference>
<dbReference type="GO" id="GO:0003723">
    <property type="term" value="F:RNA binding"/>
    <property type="evidence" value="ECO:0007669"/>
    <property type="project" value="InterPro"/>
</dbReference>
<dbReference type="GO" id="GO:0160148">
    <property type="term" value="F:tRNA pseudouridine(55) synthase activity"/>
    <property type="evidence" value="ECO:0007669"/>
    <property type="project" value="UniProtKB-EC"/>
</dbReference>
<dbReference type="GO" id="GO:1990481">
    <property type="term" value="P:mRNA pseudouridine synthesis"/>
    <property type="evidence" value="ECO:0007669"/>
    <property type="project" value="TreeGrafter"/>
</dbReference>
<dbReference type="GO" id="GO:0031119">
    <property type="term" value="P:tRNA pseudouridine synthesis"/>
    <property type="evidence" value="ECO:0007669"/>
    <property type="project" value="UniProtKB-UniRule"/>
</dbReference>
<dbReference type="CDD" id="cd02573">
    <property type="entry name" value="PseudoU_synth_EcTruB"/>
    <property type="match status" value="1"/>
</dbReference>
<dbReference type="Gene3D" id="3.30.2350.10">
    <property type="entry name" value="Pseudouridine synthase"/>
    <property type="match status" value="1"/>
</dbReference>
<dbReference type="Gene3D" id="2.30.130.10">
    <property type="entry name" value="PUA domain"/>
    <property type="match status" value="1"/>
</dbReference>
<dbReference type="HAMAP" id="MF_01080">
    <property type="entry name" value="TruB_bact"/>
    <property type="match status" value="1"/>
</dbReference>
<dbReference type="InterPro" id="IPR020103">
    <property type="entry name" value="PsdUridine_synth_cat_dom_sf"/>
</dbReference>
<dbReference type="InterPro" id="IPR002501">
    <property type="entry name" value="PsdUridine_synth_N"/>
</dbReference>
<dbReference type="InterPro" id="IPR036974">
    <property type="entry name" value="PUA_sf"/>
</dbReference>
<dbReference type="InterPro" id="IPR014780">
    <property type="entry name" value="tRNA_psdUridine_synth_TruB"/>
</dbReference>
<dbReference type="InterPro" id="IPR015240">
    <property type="entry name" value="tRNA_sdUridine_synth_fam1_C"/>
</dbReference>
<dbReference type="InterPro" id="IPR032819">
    <property type="entry name" value="TruB_C"/>
</dbReference>
<dbReference type="NCBIfam" id="TIGR00431">
    <property type="entry name" value="TruB"/>
    <property type="match status" value="1"/>
</dbReference>
<dbReference type="PANTHER" id="PTHR13767:SF2">
    <property type="entry name" value="PSEUDOURIDYLATE SYNTHASE TRUB1"/>
    <property type="match status" value="1"/>
</dbReference>
<dbReference type="PANTHER" id="PTHR13767">
    <property type="entry name" value="TRNA-PSEUDOURIDINE SYNTHASE"/>
    <property type="match status" value="1"/>
</dbReference>
<dbReference type="Pfam" id="PF09157">
    <property type="entry name" value="TruB-C_2"/>
    <property type="match status" value="1"/>
</dbReference>
<dbReference type="Pfam" id="PF16198">
    <property type="entry name" value="TruB_C_2"/>
    <property type="match status" value="1"/>
</dbReference>
<dbReference type="Pfam" id="PF01509">
    <property type="entry name" value="TruB_N"/>
    <property type="match status" value="1"/>
</dbReference>
<dbReference type="SUPFAM" id="SSF55120">
    <property type="entry name" value="Pseudouridine synthase"/>
    <property type="match status" value="1"/>
</dbReference>
<feature type="chain" id="PRO_1000136814" description="tRNA pseudouridine synthase B">
    <location>
        <begin position="1"/>
        <end position="308"/>
    </location>
</feature>
<feature type="active site" description="Nucleophile" evidence="1">
    <location>
        <position position="45"/>
    </location>
</feature>
<proteinExistence type="inferred from homology"/>
<keyword id="KW-0413">Isomerase</keyword>
<keyword id="KW-1185">Reference proteome</keyword>
<keyword id="KW-0819">tRNA processing</keyword>
<name>TRUB_GLOC7</name>
<sequence length="308" mass="33494">MGDNLLTMLGFLNLNKPGGWTSHDCVAKIRRLLKIKRVGHGGTLDPAATGVLPIAVGKATRLLPFLPEKKAYQARIRLGVTTNTDDLQGEILQIGSANHLTLEQIDPLLRQFIGEIEQIPPAFSAISQGGKRLYELARKGELVTPPSRIVHVEKINILDWYPGEHPELELEIICGGGTYIRSIARDLGNLLGVGGTLANLIRTQSCGLELSKSLTLADLETQQHQGNLPLIFPQLALKHLLTISLSAPEARRWCQGQSIVIINSIKLPQSQSVQVVGENGDFLGIGEIATVNISDDREQTLIPKVVLS</sequence>